<organism>
    <name type="scientific">Homo sapiens</name>
    <name type="common">Human</name>
    <dbReference type="NCBI Taxonomy" id="9606"/>
    <lineage>
        <taxon>Eukaryota</taxon>
        <taxon>Metazoa</taxon>
        <taxon>Chordata</taxon>
        <taxon>Craniata</taxon>
        <taxon>Vertebrata</taxon>
        <taxon>Euteleostomi</taxon>
        <taxon>Mammalia</taxon>
        <taxon>Eutheria</taxon>
        <taxon>Euarchontoglires</taxon>
        <taxon>Primates</taxon>
        <taxon>Haplorrhini</taxon>
        <taxon>Catarrhini</taxon>
        <taxon>Hominidae</taxon>
        <taxon>Homo</taxon>
    </lineage>
</organism>
<name>CO9A1_HUMAN</name>
<protein>
    <recommendedName>
        <fullName>Collagen alpha-1(IX) chain</fullName>
    </recommendedName>
</protein>
<evidence type="ECO:0000250" key="1"/>
<evidence type="ECO:0000255" key="2"/>
<evidence type="ECO:0000256" key="3">
    <source>
        <dbReference type="SAM" id="MobiDB-lite"/>
    </source>
</evidence>
<evidence type="ECO:0000269" key="4">
    <source>
    </source>
</evidence>
<evidence type="ECO:0000269" key="5">
    <source>
    </source>
</evidence>
<evidence type="ECO:0000269" key="6">
    <source>
    </source>
</evidence>
<evidence type="ECO:0000269" key="7">
    <source>
    </source>
</evidence>
<evidence type="ECO:0000269" key="8">
    <source>
    </source>
</evidence>
<evidence type="ECO:0000269" key="9">
    <source>
    </source>
</evidence>
<evidence type="ECO:0000269" key="10">
    <source>
    </source>
</evidence>
<evidence type="ECO:0000269" key="11">
    <source>
    </source>
</evidence>
<evidence type="ECO:0000303" key="12">
    <source>
    </source>
</evidence>
<evidence type="ECO:0000303" key="13">
    <source>
    </source>
</evidence>
<evidence type="ECO:0000305" key="14"/>
<evidence type="ECO:0007829" key="15">
    <source>
        <dbReference type="PDB" id="2UUR"/>
    </source>
</evidence>
<evidence type="ECO:0007829" key="16">
    <source>
        <dbReference type="PDB" id="5CTD"/>
    </source>
</evidence>
<gene>
    <name type="primary">COL9A1</name>
</gene>
<proteinExistence type="evidence at protein level"/>
<feature type="signal peptide">
    <location>
        <begin position="1"/>
        <end position="23"/>
    </location>
</feature>
<feature type="chain" id="PRO_0000005765" description="Collagen alpha-1(IX) chain">
    <location>
        <begin position="24"/>
        <end position="921"/>
    </location>
</feature>
<feature type="domain" description="Laminin G-like">
    <location>
        <begin position="50"/>
        <end position="244"/>
    </location>
</feature>
<feature type="domain" description="Collagen-like 1">
    <location>
        <begin position="269"/>
        <end position="324"/>
    </location>
</feature>
<feature type="domain" description="Collagen-like 2">
    <location>
        <begin position="325"/>
        <end position="356"/>
    </location>
</feature>
<feature type="domain" description="Collagen-like 3">
    <location>
        <begin position="358"/>
        <end position="403"/>
    </location>
</feature>
<feature type="domain" description="Collagen-like 4">
    <location>
        <begin position="416"/>
        <end position="472"/>
    </location>
</feature>
<feature type="domain" description="Collagen-like 5">
    <location>
        <begin position="473"/>
        <end position="516"/>
    </location>
</feature>
<feature type="domain" description="Collagen-like 6">
    <location>
        <begin position="587"/>
        <end position="643"/>
    </location>
</feature>
<feature type="domain" description="Collagen-like 7">
    <location>
        <begin position="655"/>
        <end position="712"/>
    </location>
</feature>
<feature type="domain" description="Collagen-like 8">
    <location>
        <begin position="713"/>
        <end position="755"/>
    </location>
</feature>
<feature type="domain" description="Collagen-like 9">
    <location>
        <begin position="790"/>
        <end position="847"/>
    </location>
</feature>
<feature type="domain" description="Collagen-like 10">
    <location>
        <begin position="848"/>
        <end position="899"/>
    </location>
</feature>
<feature type="region of interest" description="Nonhelical region (NC4)">
    <location>
        <begin position="24"/>
        <end position="268"/>
    </location>
</feature>
<feature type="region of interest" description="Disordered" evidence="3">
    <location>
        <begin position="254"/>
        <end position="759"/>
    </location>
</feature>
<feature type="region of interest" description="Triple-helical region (COL3)">
    <location>
        <begin position="269"/>
        <end position="405"/>
    </location>
</feature>
<feature type="region of interest" description="Nonhelical region (NC3)">
    <location>
        <begin position="406"/>
        <end position="417"/>
    </location>
</feature>
<feature type="region of interest" description="Triple-helical region (COL2)">
    <location>
        <begin position="418"/>
        <end position="756"/>
    </location>
</feature>
<feature type="region of interest" description="Nonhelical region (NC2)">
    <location>
        <begin position="757"/>
        <end position="786"/>
    </location>
</feature>
<feature type="region of interest" description="Disordered" evidence="3">
    <location>
        <begin position="783"/>
        <end position="905"/>
    </location>
</feature>
<feature type="region of interest" description="Triple-helical region (COL1)">
    <location>
        <begin position="787"/>
        <end position="901"/>
    </location>
</feature>
<feature type="region of interest" description="Nonhelical region (NC1)">
    <location>
        <begin position="902"/>
        <end position="921"/>
    </location>
</feature>
<feature type="compositionally biased region" description="Pro residues" evidence="3">
    <location>
        <begin position="273"/>
        <end position="285"/>
    </location>
</feature>
<feature type="compositionally biased region" description="Pro residues" evidence="3">
    <location>
        <begin position="298"/>
        <end position="307"/>
    </location>
</feature>
<feature type="compositionally biased region" description="Low complexity" evidence="3">
    <location>
        <begin position="368"/>
        <end position="383"/>
    </location>
</feature>
<feature type="compositionally biased region" description="Pro residues" evidence="3">
    <location>
        <begin position="387"/>
        <end position="398"/>
    </location>
</feature>
<feature type="compositionally biased region" description="Basic and acidic residues" evidence="3">
    <location>
        <begin position="479"/>
        <end position="489"/>
    </location>
</feature>
<feature type="compositionally biased region" description="Low complexity" evidence="3">
    <location>
        <begin position="602"/>
        <end position="621"/>
    </location>
</feature>
<feature type="compositionally biased region" description="Low complexity" evidence="3">
    <location>
        <begin position="630"/>
        <end position="650"/>
    </location>
</feature>
<feature type="compositionally biased region" description="Pro residues" evidence="3">
    <location>
        <begin position="794"/>
        <end position="804"/>
    </location>
</feature>
<feature type="compositionally biased region" description="Basic and acidic residues" evidence="3">
    <location>
        <begin position="833"/>
        <end position="845"/>
    </location>
</feature>
<feature type="compositionally biased region" description="Pro residues" evidence="3">
    <location>
        <begin position="888"/>
        <end position="897"/>
    </location>
</feature>
<feature type="binding site">
    <location>
        <position position="213"/>
    </location>
    <ligand>
        <name>Zn(2+)</name>
        <dbReference type="ChEBI" id="CHEBI:29105"/>
    </ligand>
</feature>
<feature type="binding site">
    <location>
        <position position="215"/>
    </location>
    <ligand>
        <name>Zn(2+)</name>
        <dbReference type="ChEBI" id="CHEBI:29105"/>
    </ligand>
</feature>
<feature type="binding site">
    <location>
        <position position="253"/>
    </location>
    <ligand>
        <name>Zn(2+)</name>
        <dbReference type="ChEBI" id="CHEBI:29105"/>
    </ligand>
</feature>
<feature type="glycosylation site" description="N-linked (GlcNAc...) asparagine" evidence="2">
    <location>
        <position position="171"/>
    </location>
</feature>
<feature type="disulfide bond" evidence="6">
    <location>
        <begin position="44"/>
        <end position="242"/>
    </location>
</feature>
<feature type="disulfide bond" evidence="6">
    <location>
        <begin position="198"/>
        <end position="252"/>
    </location>
</feature>
<feature type="disulfide bond" description="Interchain" evidence="6">
    <location>
        <position position="411"/>
    </location>
</feature>
<feature type="disulfide bond" description="Interchain" evidence="6">
    <location>
        <position position="415"/>
    </location>
</feature>
<feature type="splice variant" id="VSP_001141" description="In isoform 2." evidence="12 13">
    <location>
        <begin position="1"/>
        <end position="243"/>
    </location>
</feature>
<feature type="splice variant" id="VSP_001142" description="In isoform 2." evidence="12 13">
    <original>PLRPRRETCHELPARITPSQTTDE</original>
    <variation>MAWTARDRGALGLLLLGLCLCAAQ</variation>
    <location>
        <begin position="244"/>
        <end position="267"/>
    </location>
</feature>
<feature type="splice variant" id="VSP_015250" description="In isoform 3." evidence="12">
    <original>GLT</original>
    <variation>TSP</variation>
    <location>
        <begin position="326"/>
        <end position="328"/>
    </location>
</feature>
<feature type="splice variant" id="VSP_015251" description="In isoform 3." evidence="12">
    <location>
        <begin position="329"/>
        <end position="921"/>
    </location>
</feature>
<feature type="sequence variant" id="VAR_087538" description="In STL4." evidence="5 7">
    <location>
        <begin position="295"/>
        <end position="921"/>
    </location>
</feature>
<feature type="sequence variant" id="VAR_026463" description="In dbSNP:rs592121." evidence="4">
    <original>S</original>
    <variation>P</variation>
    <location>
        <position position="339"/>
    </location>
</feature>
<feature type="sequence variant" id="VAR_087539" description="In STL4." evidence="7 10">
    <location>
        <begin position="507"/>
        <end position="921"/>
    </location>
</feature>
<feature type="sequence variant" id="VAR_026464" description="In dbSNP:rs1135056." evidence="4 11">
    <original>Q</original>
    <variation>R</variation>
    <location>
        <position position="621"/>
    </location>
</feature>
<feature type="sequence variant" id="VAR_055668" description="In dbSNP:rs35470562.">
    <original>E</original>
    <variation>K</variation>
    <location>
        <position position="684"/>
    </location>
</feature>
<feature type="sequence variant" id="VAR_055669" description="In dbSNP:rs6910140.">
    <original>M</original>
    <variation>V</variation>
    <location>
        <position position="767"/>
    </location>
</feature>
<feature type="sequence variant" id="VAR_023326" description="In dbSNP:rs1056921." evidence="8 9 11">
    <original>R</original>
    <variation>K</variation>
    <location>
        <position position="870"/>
    </location>
</feature>
<feature type="sequence variant" id="VAR_023327" description="In dbSNP:rs1056923." evidence="8 9 11">
    <original>V</original>
    <variation>L</variation>
    <location>
        <position position="882"/>
    </location>
</feature>
<feature type="sequence conflict" description="In Ref. 1; CAA38276/CAA38277." evidence="14" ref="1">
    <original>PP</original>
    <variation>AS</variation>
    <location>
        <begin position="279"/>
        <end position="280"/>
    </location>
</feature>
<feature type="sequence conflict" description="In Ref. 1; CAA38276." evidence="14" ref="1">
    <original>I</original>
    <variation>L</variation>
    <location>
        <position position="476"/>
    </location>
</feature>
<feature type="sequence conflict" description="In Ref. 2; AAC33527/AAC33528." evidence="14" ref="2">
    <original>Q</original>
    <variation>H</variation>
    <location>
        <position position="570"/>
    </location>
</feature>
<feature type="sequence conflict" description="In Ref. 1; AAA53475." evidence="14" ref="1">
    <original>AGQRAFNKGPDP</original>
    <variation>LVSEHLTKGLTLERLTAAWLSA</variation>
    <location>
        <begin position="910"/>
        <end position="921"/>
    </location>
</feature>
<feature type="strand" evidence="15">
    <location>
        <begin position="56"/>
        <end position="58"/>
    </location>
</feature>
<feature type="helix" evidence="15">
    <location>
        <begin position="59"/>
        <end position="62"/>
    </location>
</feature>
<feature type="helix" evidence="15">
    <location>
        <begin position="65"/>
        <end position="69"/>
    </location>
</feature>
<feature type="turn" evidence="15">
    <location>
        <begin position="70"/>
        <end position="72"/>
    </location>
</feature>
<feature type="strand" evidence="15">
    <location>
        <begin position="76"/>
        <end position="78"/>
    </location>
</feature>
<feature type="strand" evidence="15">
    <location>
        <begin position="85"/>
        <end position="89"/>
    </location>
</feature>
<feature type="strand" evidence="15">
    <location>
        <begin position="96"/>
        <end position="98"/>
    </location>
</feature>
<feature type="helix" evidence="15">
    <location>
        <begin position="99"/>
        <end position="102"/>
    </location>
</feature>
<feature type="strand" evidence="15">
    <location>
        <begin position="109"/>
        <end position="118"/>
    </location>
</feature>
<feature type="helix" evidence="15">
    <location>
        <begin position="121"/>
        <end position="125"/>
    </location>
</feature>
<feature type="strand" evidence="15">
    <location>
        <begin position="127"/>
        <end position="134"/>
    </location>
</feature>
<feature type="strand" evidence="15">
    <location>
        <begin position="140"/>
        <end position="147"/>
    </location>
</feature>
<feature type="helix" evidence="15">
    <location>
        <begin position="148"/>
        <end position="150"/>
    </location>
</feature>
<feature type="strand" evidence="15">
    <location>
        <begin position="152"/>
        <end position="159"/>
    </location>
</feature>
<feature type="strand" evidence="15">
    <location>
        <begin position="164"/>
        <end position="169"/>
    </location>
</feature>
<feature type="helix" evidence="15">
    <location>
        <begin position="173"/>
        <end position="175"/>
    </location>
</feature>
<feature type="strand" evidence="15">
    <location>
        <begin position="177"/>
        <end position="179"/>
    </location>
</feature>
<feature type="strand" evidence="15">
    <location>
        <begin position="181"/>
        <end position="188"/>
    </location>
</feature>
<feature type="strand" evidence="15">
    <location>
        <begin position="191"/>
        <end position="196"/>
    </location>
</feature>
<feature type="strand" evidence="15">
    <location>
        <begin position="199"/>
        <end position="205"/>
    </location>
</feature>
<feature type="strand" evidence="15">
    <location>
        <begin position="215"/>
        <end position="225"/>
    </location>
</feature>
<feature type="strand" evidence="15">
    <location>
        <begin position="233"/>
        <end position="242"/>
    </location>
</feature>
<feature type="helix" evidence="15">
    <location>
        <begin position="246"/>
        <end position="249"/>
    </location>
</feature>
<feature type="helix" evidence="16">
    <location>
        <begin position="759"/>
        <end position="771"/>
    </location>
</feature>
<feature type="helix" evidence="16">
    <location>
        <begin position="774"/>
        <end position="781"/>
    </location>
</feature>
<reference key="1">
    <citation type="journal article" date="1990" name="Eur. J. Biochem.">
        <title>The complete primary structure of two distinct forms of human alpha 1 (IX) collagen chains.</title>
        <authorList>
            <person name="Muragaki Y."/>
            <person name="Kimura T."/>
            <person name="Ninomiya Y."/>
            <person name="Olsen B.R."/>
        </authorList>
    </citation>
    <scope>NUCLEOTIDE SEQUENCE [GENOMIC DNA]</scope>
    <scope>ALTERNATIVE SPLICING</scope>
    <scope>VARIANTS LYS-870 AND LEU-882</scope>
</reference>
<reference key="2">
    <citation type="journal article" date="1998" name="Matrix Biol.">
        <title>Human COL9A1 and COL9A2 genes. Two genes of 90 and 15 kb code for similar polypeptides of the same collagen molecule.</title>
        <authorList>
            <person name="Pihlajamaa T."/>
            <person name="Vuoristo M.M."/>
            <person name="Annunen S."/>
            <person name="Peraelae M."/>
            <person name="Prockop D.J."/>
            <person name="Ala-Kokko L."/>
        </authorList>
    </citation>
    <scope>NUCLEOTIDE SEQUENCE [MRNA] (ISOFORMS 1 AND 2)</scope>
    <scope>ALTERNATIVE SPLICING</scope>
    <scope>VARIANTS ARG-621; LYS-870 AND LEU-882</scope>
</reference>
<reference key="3">
    <citation type="journal article" date="2003" name="Nature">
        <title>The DNA sequence and analysis of human chromosome 6.</title>
        <authorList>
            <person name="Mungall A.J."/>
            <person name="Palmer S.A."/>
            <person name="Sims S.K."/>
            <person name="Edwards C.A."/>
            <person name="Ashurst J.L."/>
            <person name="Wilming L."/>
            <person name="Jones M.C."/>
            <person name="Horton R."/>
            <person name="Hunt S.E."/>
            <person name="Scott C.E."/>
            <person name="Gilbert J.G.R."/>
            <person name="Clamp M.E."/>
            <person name="Bethel G."/>
            <person name="Milne S."/>
            <person name="Ainscough R."/>
            <person name="Almeida J.P."/>
            <person name="Ambrose K.D."/>
            <person name="Andrews T.D."/>
            <person name="Ashwell R.I.S."/>
            <person name="Babbage A.K."/>
            <person name="Bagguley C.L."/>
            <person name="Bailey J."/>
            <person name="Banerjee R."/>
            <person name="Barker D.J."/>
            <person name="Barlow K.F."/>
            <person name="Bates K."/>
            <person name="Beare D.M."/>
            <person name="Beasley H."/>
            <person name="Beasley O."/>
            <person name="Bird C.P."/>
            <person name="Blakey S.E."/>
            <person name="Bray-Allen S."/>
            <person name="Brook J."/>
            <person name="Brown A.J."/>
            <person name="Brown J.Y."/>
            <person name="Burford D.C."/>
            <person name="Burrill W."/>
            <person name="Burton J."/>
            <person name="Carder C."/>
            <person name="Carter N.P."/>
            <person name="Chapman J.C."/>
            <person name="Clark S.Y."/>
            <person name="Clark G."/>
            <person name="Clee C.M."/>
            <person name="Clegg S."/>
            <person name="Cobley V."/>
            <person name="Collier R.E."/>
            <person name="Collins J.E."/>
            <person name="Colman L.K."/>
            <person name="Corby N.R."/>
            <person name="Coville G.J."/>
            <person name="Culley K.M."/>
            <person name="Dhami P."/>
            <person name="Davies J."/>
            <person name="Dunn M."/>
            <person name="Earthrowl M.E."/>
            <person name="Ellington A.E."/>
            <person name="Evans K.A."/>
            <person name="Faulkner L."/>
            <person name="Francis M.D."/>
            <person name="Frankish A."/>
            <person name="Frankland J."/>
            <person name="French L."/>
            <person name="Garner P."/>
            <person name="Garnett J."/>
            <person name="Ghori M.J."/>
            <person name="Gilby L.M."/>
            <person name="Gillson C.J."/>
            <person name="Glithero R.J."/>
            <person name="Grafham D.V."/>
            <person name="Grant M."/>
            <person name="Gribble S."/>
            <person name="Griffiths C."/>
            <person name="Griffiths M.N.D."/>
            <person name="Hall R."/>
            <person name="Halls K.S."/>
            <person name="Hammond S."/>
            <person name="Harley J.L."/>
            <person name="Hart E.A."/>
            <person name="Heath P.D."/>
            <person name="Heathcott R."/>
            <person name="Holmes S.J."/>
            <person name="Howden P.J."/>
            <person name="Howe K.L."/>
            <person name="Howell G.R."/>
            <person name="Huckle E."/>
            <person name="Humphray S.J."/>
            <person name="Humphries M.D."/>
            <person name="Hunt A.R."/>
            <person name="Johnson C.M."/>
            <person name="Joy A.A."/>
            <person name="Kay M."/>
            <person name="Keenan S.J."/>
            <person name="Kimberley A.M."/>
            <person name="King A."/>
            <person name="Laird G.K."/>
            <person name="Langford C."/>
            <person name="Lawlor S."/>
            <person name="Leongamornlert D.A."/>
            <person name="Leversha M."/>
            <person name="Lloyd C.R."/>
            <person name="Lloyd D.M."/>
            <person name="Loveland J.E."/>
            <person name="Lovell J."/>
            <person name="Martin S."/>
            <person name="Mashreghi-Mohammadi M."/>
            <person name="Maslen G.L."/>
            <person name="Matthews L."/>
            <person name="McCann O.T."/>
            <person name="McLaren S.J."/>
            <person name="McLay K."/>
            <person name="McMurray A."/>
            <person name="Moore M.J.F."/>
            <person name="Mullikin J.C."/>
            <person name="Niblett D."/>
            <person name="Nickerson T."/>
            <person name="Novik K.L."/>
            <person name="Oliver K."/>
            <person name="Overton-Larty E.K."/>
            <person name="Parker A."/>
            <person name="Patel R."/>
            <person name="Pearce A.V."/>
            <person name="Peck A.I."/>
            <person name="Phillimore B.J.C.T."/>
            <person name="Phillips S."/>
            <person name="Plumb R.W."/>
            <person name="Porter K.M."/>
            <person name="Ramsey Y."/>
            <person name="Ranby S.A."/>
            <person name="Rice C.M."/>
            <person name="Ross M.T."/>
            <person name="Searle S.M."/>
            <person name="Sehra H.K."/>
            <person name="Sheridan E."/>
            <person name="Skuce C.D."/>
            <person name="Smith S."/>
            <person name="Smith M."/>
            <person name="Spraggon L."/>
            <person name="Squares S.L."/>
            <person name="Steward C.A."/>
            <person name="Sycamore N."/>
            <person name="Tamlyn-Hall G."/>
            <person name="Tester J."/>
            <person name="Theaker A.J."/>
            <person name="Thomas D.W."/>
            <person name="Thorpe A."/>
            <person name="Tracey A."/>
            <person name="Tromans A."/>
            <person name="Tubby B."/>
            <person name="Wall M."/>
            <person name="Wallis J.M."/>
            <person name="West A.P."/>
            <person name="White S.S."/>
            <person name="Whitehead S.L."/>
            <person name="Whittaker H."/>
            <person name="Wild A."/>
            <person name="Willey D.J."/>
            <person name="Wilmer T.E."/>
            <person name="Wood J.M."/>
            <person name="Wray P.W."/>
            <person name="Wyatt J.C."/>
            <person name="Young L."/>
            <person name="Younger R.M."/>
            <person name="Bentley D.R."/>
            <person name="Coulson A."/>
            <person name="Durbin R.M."/>
            <person name="Hubbard T."/>
            <person name="Sulston J.E."/>
            <person name="Dunham I."/>
            <person name="Rogers J."/>
            <person name="Beck S."/>
        </authorList>
    </citation>
    <scope>NUCLEOTIDE SEQUENCE [LARGE SCALE GENOMIC DNA]</scope>
</reference>
<reference key="4">
    <citation type="journal article" date="2004" name="Genome Res.">
        <title>The status, quality, and expansion of the NIH full-length cDNA project: the Mammalian Gene Collection (MGC).</title>
        <authorList>
            <consortium name="The MGC Project Team"/>
        </authorList>
    </citation>
    <scope>NUCLEOTIDE SEQUENCE [LARGE SCALE MRNA] (ISOFORMS 2 AND 3)</scope>
    <source>
        <tissue>Brain</tissue>
        <tissue>Mammary gland</tissue>
    </source>
</reference>
<reference key="5">
    <citation type="journal article" date="1996" name="Biochem. J.">
        <title>Collagen type IX from human cartilage: a structural profile of intermolecular cross-linking sites.</title>
        <authorList>
            <person name="Diab M."/>
            <person name="Wu J.J."/>
            <person name="Eyre D.R."/>
        </authorList>
    </citation>
    <scope>PROTEIN SEQUENCE OF 405-417 (ISOFORMS 1/2)</scope>
</reference>
<reference key="6">
    <citation type="journal article" date="1989" name="Eur. J. Biochem.">
        <title>Molecular cloning of rat and human type IX collagen cDNA and localization of the alpha 1(IX) gene on the human chromosome 6.</title>
        <authorList>
            <person name="Kimura T."/>
            <person name="Mattei M.-G."/>
            <person name="Stevens J.W."/>
            <person name="Goldring M.B."/>
            <person name="Ninomiya Y."/>
            <person name="Olsen B.R."/>
        </authorList>
    </citation>
    <scope>NUCLEOTIDE SEQUENCE [GENOMIC DNA] OF 580-820 AND 835-884</scope>
    <scope>VARIANTS LYS-870 AND LEU-882</scope>
</reference>
<reference key="7">
    <citation type="journal article" date="1990" name="Proc. Natl. Acad. Sci. U.S.A.">
        <title>The alpha 1 (IX) collagen gene gives rise to two different transcripts in both mouse embryonic and human fetal RNA.</title>
        <authorList>
            <person name="Muragaki Y."/>
            <person name="Nishimura I."/>
            <person name="Henney A."/>
            <person name="Ninomiya Y."/>
            <person name="Olsen B.R."/>
        </authorList>
    </citation>
    <scope>PARTIAL NUCLEOTIDE SEQUENCE [GENOMIC DNA]</scope>
    <scope>ALTERNATIVE SPLICING</scope>
</reference>
<reference key="8">
    <citation type="journal article" date="2007" name="J. Biol. Chem.">
        <title>Crystal structure of the N-terminal NC4 domain of collagen IX, a zinc binding member of the laminin-neurexin-sex hormone binding globulin (LNS) domain family.</title>
        <authorList>
            <person name="Leppanen V.M."/>
            <person name="Tossavainen H."/>
            <person name="Permi P."/>
            <person name="Lehtio L."/>
            <person name="Ronnholm G."/>
            <person name="Goldman A."/>
            <person name="Kilpelainen I."/>
            <person name="Pihlajamaa T."/>
        </authorList>
    </citation>
    <scope>X-RAY CRYSTALLOGRAPHY (1.8 ANGSTROMS) OF 24-268</scope>
    <scope>DISULFIDE BONDS</scope>
    <scope>ZINC-BINDING SITES</scope>
</reference>
<reference key="9">
    <citation type="journal article" date="2001" name="Am. J. Hum. Genet.">
        <title>A mutation in COL9A1 causes multiple epiphyseal dysplasia: further evidence for locus heterogeneity.</title>
        <authorList>
            <person name="Czarny-Ratajczak M."/>
            <person name="Lohiniva J."/>
            <person name="Rogala P."/>
            <person name="Kozlowski K."/>
            <person name="Peraelae M."/>
            <person name="Carter L."/>
            <person name="Spector T.D."/>
            <person name="Kolodziej L."/>
            <person name="Seppaenen U."/>
            <person name="Glazar R."/>
            <person name="Krolewski J."/>
            <person name="Latos-Bielenska A."/>
            <person name="Ala-Kokko L."/>
        </authorList>
    </citation>
    <scope>VARIANTS PRO-339 AND ARG-621</scope>
    <scope>INVOLVEMENT IN EDM6</scope>
</reference>
<reference key="10">
    <citation type="journal article" date="2006" name="Am. J. Hum. Genet.">
        <title>A new autosomal recessive form of Stickler syndrome is caused by a mutation in the COL9A1 gene.</title>
        <authorList>
            <person name="Van Camp G."/>
            <person name="Snoeckx R.L."/>
            <person name="Hilgert N."/>
            <person name="van den Ende J."/>
            <person name="Fukuoka H."/>
            <person name="Wagatsuma M."/>
            <person name="Suzuki H."/>
            <person name="Smets R.M."/>
            <person name="Vanhoenacker F."/>
            <person name="Declau F."/>
            <person name="Van de Heyning P."/>
            <person name="Usami S."/>
        </authorList>
    </citation>
    <scope>VARIANT STL4 295-ARG--PRO-921 DEL</scope>
    <scope>INVOLVEMENT IN STL4</scope>
</reference>
<reference key="11">
    <citation type="journal article" date="2011" name="Invest. Ophthalmol. Vis. Sci.">
        <title>Autosomal recessive Stickler syndrome in two families is caused by mutations in the COL9A1 gene.</title>
        <authorList>
            <person name="Nikopoulos K."/>
            <person name="Schrauwen I."/>
            <person name="Simon M."/>
            <person name="Collin R.W."/>
            <person name="Veckeneer M."/>
            <person name="Keymolen K."/>
            <person name="Van Camp G."/>
            <person name="Cremers F.P."/>
            <person name="van den Born L.I."/>
        </authorList>
    </citation>
    <scope>VARIANTS STL4 295-ARG--PRO-921 DEL AND 507-ARG--PRO-921 DEL</scope>
    <scope>INVOLVEMENT IN STL4</scope>
</reference>
<reference key="12">
    <citation type="journal article" date="2019" name="Am. J. Med. Genet. A">
        <title>Homozygous Type IX collagen variants (COL9A1, COL9A2, and COL9A3) causing recessive Stickler syndrome-Expanding the phenotype.</title>
        <authorList>
            <person name="Nixon T.R.W."/>
            <person name="Alexander P."/>
            <person name="Richards A."/>
            <person name="McNinch A."/>
            <person name="Bearcroft P.W.P."/>
            <person name="Cobben J."/>
            <person name="Snead M.P."/>
        </authorList>
    </citation>
    <scope>VARIANT STL4 507-ARG--PRO-921 DEL</scope>
</reference>
<sequence>MKTCWKIPVFFFVCSFLEPWASAAVKRRPRFPVNSNSNGGNELCPKIRIGQDDLPGFDLISQFQVDKAASRRAIQRVVGSATLQVAYKLGNNVDFRIPTRNLYPSGLPEEYSFLTTFRMTGSTLKKNWNIWQIQDSSGKEQVGIKINGQTQSVVFSYKGLDGSLQTAAFSNLSSLFDSQWHKIMIGVERSSATLFVDCNRIESLPIKPRGPIDIDGFAVLGKLADNPQVSVPFELQWMLIHCDPLRPRRETCHELPARITPSQTTDERGPPGEQGPPGPPGPPGVPGIDGIDGDRGPKGPPGPPGPAGEPGKPGAPGKPGTPGADGLTGPDGSPGSIGSKGQKGEPGVPGSRGFPGRGIPGPPGPPGTAGLPGELGRVGPVGDPGRRGPPGPPGPPGPRGTIGFHDGDPLCPNACPPGRSGYPGLPGMRGHKGAKGEIGEPGRQGHKGEEGDQGELGEVGAQGPPGAQGLRGITGIVGDKGEKGARGLDGEPGPQGLPGAPGDQGQRGPPGEAGPKGDRGAEGARGIPGLPGPKGDTGLPGVDGRDGIPGMPGTKGEPGKPGPPGDAGLQGLPGVPGIPGAKGVAGEKGSTGAPGKPGQMGNSGKPGQQGPPGEVGPRGPQGLPGSRGELGPVGSPGLPGKLGSLGSPGLPGLPGPPGLPGMKGDRGVVGEPGPKGEQGASGEEGEAGERGELGDIGLPGPKGSAGNPGEPGLRGPEGSRGLPGVEGPRGPPGPRGVQGEQGATGLPGVQGPPGRAPTDQHIKQVCMRVIQEHFAEMAASLKRPDSGATGLPGRPGPPGPPGPPGENGFPGQMGIRGLPGIKGPPGALGLRGPKGDLGEKGERGPPGRGPNGLPGAIGLPGDPGPASYGRNGRDGERGPPGVAGIPGVPGPPGPPGLPGFCEPASCTMQAGQRAFNKGPDP</sequence>
<keyword id="KW-0002">3D-structure</keyword>
<keyword id="KW-0025">Alternative splicing</keyword>
<keyword id="KW-0176">Collagen</keyword>
<keyword id="KW-0209">Deafness</keyword>
<keyword id="KW-0903">Direct protein sequencing</keyword>
<keyword id="KW-0225">Disease variant</keyword>
<keyword id="KW-1015">Disulfide bond</keyword>
<keyword id="KW-0272">Extracellular matrix</keyword>
<keyword id="KW-0325">Glycoprotein</keyword>
<keyword id="KW-0379">Hydroxylation</keyword>
<keyword id="KW-0479">Metal-binding</keyword>
<keyword id="KW-1267">Proteomics identification</keyword>
<keyword id="KW-1185">Reference proteome</keyword>
<keyword id="KW-0677">Repeat</keyword>
<keyword id="KW-0964">Secreted</keyword>
<keyword id="KW-0732">Signal</keyword>
<keyword id="KW-0757">Stickler syndrome</keyword>
<keyword id="KW-0862">Zinc</keyword>
<accession>P20849</accession>
<accession>Q13699</accession>
<accession>Q13700</accession>
<accession>Q5TF52</accession>
<accession>Q6P467</accession>
<accession>Q96BM8</accession>
<accession>Q99225</accession>
<accession>Q9H151</accession>
<accession>Q9H152</accession>
<accession>Q9Y6P2</accession>
<accession>Q9Y6P3</accession>
<dbReference type="EMBL" id="X54412">
    <property type="protein sequence ID" value="CAA38276.1"/>
    <property type="molecule type" value="mRNA"/>
</dbReference>
<dbReference type="EMBL" id="X54413">
    <property type="protein sequence ID" value="CAA38277.1"/>
    <property type="molecule type" value="mRNA"/>
</dbReference>
<dbReference type="EMBL" id="AF036130">
    <property type="protein sequence ID" value="AAC33527.1"/>
    <property type="molecule type" value="Genomic_DNA"/>
</dbReference>
<dbReference type="EMBL" id="AF036110">
    <property type="protein sequence ID" value="AAC33527.1"/>
    <property type="status" value="JOINED"/>
    <property type="molecule type" value="Genomic_DNA"/>
</dbReference>
<dbReference type="EMBL" id="AF036111">
    <property type="protein sequence ID" value="AAC33527.1"/>
    <property type="status" value="JOINED"/>
    <property type="molecule type" value="Genomic_DNA"/>
</dbReference>
<dbReference type="EMBL" id="AF036112">
    <property type="protein sequence ID" value="AAC33527.1"/>
    <property type="status" value="JOINED"/>
    <property type="molecule type" value="Genomic_DNA"/>
</dbReference>
<dbReference type="EMBL" id="AF036113">
    <property type="protein sequence ID" value="AAC33527.1"/>
    <property type="status" value="JOINED"/>
    <property type="molecule type" value="Genomic_DNA"/>
</dbReference>
<dbReference type="EMBL" id="AF036114">
    <property type="protein sequence ID" value="AAC33527.1"/>
    <property type="status" value="JOINED"/>
    <property type="molecule type" value="Genomic_DNA"/>
</dbReference>
<dbReference type="EMBL" id="AF036115">
    <property type="protein sequence ID" value="AAC33527.1"/>
    <property type="status" value="JOINED"/>
    <property type="molecule type" value="Genomic_DNA"/>
</dbReference>
<dbReference type="EMBL" id="AF036116">
    <property type="protein sequence ID" value="AAC33527.1"/>
    <property type="status" value="JOINED"/>
    <property type="molecule type" value="Genomic_DNA"/>
</dbReference>
<dbReference type="EMBL" id="AF036117">
    <property type="protein sequence ID" value="AAC33527.1"/>
    <property type="status" value="JOINED"/>
    <property type="molecule type" value="Genomic_DNA"/>
</dbReference>
<dbReference type="EMBL" id="AF036118">
    <property type="protein sequence ID" value="AAC33527.1"/>
    <property type="status" value="JOINED"/>
    <property type="molecule type" value="Genomic_DNA"/>
</dbReference>
<dbReference type="EMBL" id="AF036119">
    <property type="protein sequence ID" value="AAC33527.1"/>
    <property type="status" value="JOINED"/>
    <property type="molecule type" value="Genomic_DNA"/>
</dbReference>
<dbReference type="EMBL" id="AF036120">
    <property type="protein sequence ID" value="AAC33527.1"/>
    <property type="status" value="JOINED"/>
    <property type="molecule type" value="Genomic_DNA"/>
</dbReference>
<dbReference type="EMBL" id="AF036121">
    <property type="protein sequence ID" value="AAC33527.1"/>
    <property type="status" value="JOINED"/>
    <property type="molecule type" value="Genomic_DNA"/>
</dbReference>
<dbReference type="EMBL" id="AF036122">
    <property type="protein sequence ID" value="AAC33527.1"/>
    <property type="status" value="JOINED"/>
    <property type="molecule type" value="Genomic_DNA"/>
</dbReference>
<dbReference type="EMBL" id="AF036123">
    <property type="protein sequence ID" value="AAC33527.1"/>
    <property type="status" value="JOINED"/>
    <property type="molecule type" value="Genomic_DNA"/>
</dbReference>
<dbReference type="EMBL" id="AF036124">
    <property type="protein sequence ID" value="AAC33527.1"/>
    <property type="status" value="JOINED"/>
    <property type="molecule type" value="Genomic_DNA"/>
</dbReference>
<dbReference type="EMBL" id="AF036125">
    <property type="protein sequence ID" value="AAC33527.1"/>
    <property type="status" value="JOINED"/>
    <property type="molecule type" value="Genomic_DNA"/>
</dbReference>
<dbReference type="EMBL" id="AF036126">
    <property type="protein sequence ID" value="AAC33527.1"/>
    <property type="status" value="JOINED"/>
    <property type="molecule type" value="Genomic_DNA"/>
</dbReference>
<dbReference type="EMBL" id="AF036127">
    <property type="protein sequence ID" value="AAC33527.1"/>
    <property type="status" value="JOINED"/>
    <property type="molecule type" value="Genomic_DNA"/>
</dbReference>
<dbReference type="EMBL" id="AF036128">
    <property type="protein sequence ID" value="AAC33527.1"/>
    <property type="status" value="JOINED"/>
    <property type="molecule type" value="Genomic_DNA"/>
</dbReference>
<dbReference type="EMBL" id="AF036129">
    <property type="protein sequence ID" value="AAC33527.1"/>
    <property type="status" value="JOINED"/>
    <property type="molecule type" value="Genomic_DNA"/>
</dbReference>
<dbReference type="EMBL" id="AF036130">
    <property type="protein sequence ID" value="AAC33528.1"/>
    <property type="molecule type" value="Genomic_DNA"/>
</dbReference>
<dbReference type="EMBL" id="AF036112">
    <property type="protein sequence ID" value="AAC33528.1"/>
    <property type="status" value="JOINED"/>
    <property type="molecule type" value="Genomic_DNA"/>
</dbReference>
<dbReference type="EMBL" id="AF036113">
    <property type="protein sequence ID" value="AAC33528.1"/>
    <property type="status" value="JOINED"/>
    <property type="molecule type" value="Genomic_DNA"/>
</dbReference>
<dbReference type="EMBL" id="AF036114">
    <property type="protein sequence ID" value="AAC33528.1"/>
    <property type="status" value="JOINED"/>
    <property type="molecule type" value="Genomic_DNA"/>
</dbReference>
<dbReference type="EMBL" id="AF036115">
    <property type="protein sequence ID" value="AAC33528.1"/>
    <property type="status" value="JOINED"/>
    <property type="molecule type" value="Genomic_DNA"/>
</dbReference>
<dbReference type="EMBL" id="AF036116">
    <property type="protein sequence ID" value="AAC33528.1"/>
    <property type="status" value="JOINED"/>
    <property type="molecule type" value="Genomic_DNA"/>
</dbReference>
<dbReference type="EMBL" id="AF036117">
    <property type="protein sequence ID" value="AAC33528.1"/>
    <property type="status" value="JOINED"/>
    <property type="molecule type" value="Genomic_DNA"/>
</dbReference>
<dbReference type="EMBL" id="AF036118">
    <property type="protein sequence ID" value="AAC33528.1"/>
    <property type="status" value="JOINED"/>
    <property type="molecule type" value="Genomic_DNA"/>
</dbReference>
<dbReference type="EMBL" id="AF036119">
    <property type="protein sequence ID" value="AAC33528.1"/>
    <property type="status" value="JOINED"/>
    <property type="molecule type" value="Genomic_DNA"/>
</dbReference>
<dbReference type="EMBL" id="AF036120">
    <property type="protein sequence ID" value="AAC33528.1"/>
    <property type="status" value="JOINED"/>
    <property type="molecule type" value="Genomic_DNA"/>
</dbReference>
<dbReference type="EMBL" id="AF036121">
    <property type="protein sequence ID" value="AAC33528.1"/>
    <property type="status" value="JOINED"/>
    <property type="molecule type" value="Genomic_DNA"/>
</dbReference>
<dbReference type="EMBL" id="AF036122">
    <property type="protein sequence ID" value="AAC33528.1"/>
    <property type="status" value="JOINED"/>
    <property type="molecule type" value="Genomic_DNA"/>
</dbReference>
<dbReference type="EMBL" id="AF036123">
    <property type="protein sequence ID" value="AAC33528.1"/>
    <property type="status" value="JOINED"/>
    <property type="molecule type" value="Genomic_DNA"/>
</dbReference>
<dbReference type="EMBL" id="AF036124">
    <property type="protein sequence ID" value="AAC33528.1"/>
    <property type="status" value="JOINED"/>
    <property type="molecule type" value="Genomic_DNA"/>
</dbReference>
<dbReference type="EMBL" id="AF036125">
    <property type="protein sequence ID" value="AAC33528.1"/>
    <property type="status" value="JOINED"/>
    <property type="molecule type" value="Genomic_DNA"/>
</dbReference>
<dbReference type="EMBL" id="AF036126">
    <property type="protein sequence ID" value="AAC33528.1"/>
    <property type="status" value="JOINED"/>
    <property type="molecule type" value="Genomic_DNA"/>
</dbReference>
<dbReference type="EMBL" id="AF036127">
    <property type="protein sequence ID" value="AAC33528.1"/>
    <property type="status" value="JOINED"/>
    <property type="molecule type" value="Genomic_DNA"/>
</dbReference>
<dbReference type="EMBL" id="AF036128">
    <property type="protein sequence ID" value="AAC33528.1"/>
    <property type="status" value="JOINED"/>
    <property type="molecule type" value="Genomic_DNA"/>
</dbReference>
<dbReference type="EMBL" id="AF036129">
    <property type="protein sequence ID" value="AAC33528.1"/>
    <property type="status" value="JOINED"/>
    <property type="molecule type" value="Genomic_DNA"/>
</dbReference>
<dbReference type="EMBL" id="AL080275">
    <property type="status" value="NOT_ANNOTATED_CDS"/>
    <property type="molecule type" value="Genomic_DNA"/>
</dbReference>
<dbReference type="EMBL" id="AL160262">
    <property type="status" value="NOT_ANNOTATED_CDS"/>
    <property type="molecule type" value="Genomic_DNA"/>
</dbReference>
<dbReference type="EMBL" id="BC015409">
    <property type="protein sequence ID" value="AAH15409.1"/>
    <property type="molecule type" value="mRNA"/>
</dbReference>
<dbReference type="EMBL" id="BC063646">
    <property type="protein sequence ID" value="AAH63646.1"/>
    <property type="molecule type" value="mRNA"/>
</dbReference>
<dbReference type="EMBL" id="M32137">
    <property type="protein sequence ID" value="AAA53474.1"/>
    <property type="molecule type" value="Genomic_DNA"/>
</dbReference>
<dbReference type="EMBL" id="M32133">
    <property type="protein sequence ID" value="AAA53474.1"/>
    <property type="status" value="JOINED"/>
    <property type="molecule type" value="Genomic_DNA"/>
</dbReference>
<dbReference type="EMBL" id="M32137">
    <property type="protein sequence ID" value="AAA53475.1"/>
    <property type="molecule type" value="Genomic_DNA"/>
</dbReference>
<dbReference type="EMBL" id="M32135">
    <property type="protein sequence ID" value="AAA53475.1"/>
    <property type="status" value="JOINED"/>
    <property type="molecule type" value="Genomic_DNA"/>
</dbReference>
<dbReference type="CCDS" id="CCDS47447.1">
    <molecule id="P20849-2"/>
</dbReference>
<dbReference type="CCDS" id="CCDS4971.1">
    <molecule id="P20849-1"/>
</dbReference>
<dbReference type="CCDS" id="CCDS93941.1">
    <molecule id="P20849-3"/>
</dbReference>
<dbReference type="PIR" id="S13580">
    <property type="entry name" value="S13580"/>
</dbReference>
<dbReference type="PIR" id="S13581">
    <property type="entry name" value="S13581"/>
</dbReference>
<dbReference type="RefSeq" id="NP_001364220.1">
    <molecule id="P20849-3"/>
    <property type="nucleotide sequence ID" value="NM_001377291.1"/>
</dbReference>
<dbReference type="RefSeq" id="NP_001842.3">
    <molecule id="P20849-1"/>
    <property type="nucleotide sequence ID" value="NM_001851.4"/>
</dbReference>
<dbReference type="RefSeq" id="NP_511040.2">
    <molecule id="P20849-2"/>
    <property type="nucleotide sequence ID" value="NM_078485.4"/>
</dbReference>
<dbReference type="PDB" id="2UUR">
    <property type="method" value="X-ray"/>
    <property type="resolution" value="1.80 A"/>
    <property type="chains" value="A=24-268"/>
</dbReference>
<dbReference type="PDB" id="5CTD">
    <property type="method" value="X-ray"/>
    <property type="resolution" value="1.60 A"/>
    <property type="chains" value="A=754-789"/>
</dbReference>
<dbReference type="PDB" id="5CTI">
    <property type="method" value="X-ray"/>
    <property type="resolution" value="1.90 A"/>
    <property type="chains" value="A=754-789"/>
</dbReference>
<dbReference type="PDB" id="5CVA">
    <property type="method" value="X-ray"/>
    <property type="resolution" value="2.10 A"/>
    <property type="chains" value="A/D=754-789"/>
</dbReference>
<dbReference type="PDB" id="5CVB">
    <property type="method" value="X-ray"/>
    <property type="resolution" value="2.25 A"/>
    <property type="chains" value="A/D=754-789"/>
</dbReference>
<dbReference type="PDBsum" id="2UUR"/>
<dbReference type="PDBsum" id="5CTD"/>
<dbReference type="PDBsum" id="5CTI"/>
<dbReference type="PDBsum" id="5CVA"/>
<dbReference type="PDBsum" id="5CVB"/>
<dbReference type="SMR" id="P20849"/>
<dbReference type="BioGRID" id="107694">
    <property type="interactions" value="12"/>
</dbReference>
<dbReference type="ComplexPortal" id="CPX-1748">
    <property type="entry name" value="Collagen type IX trimer"/>
</dbReference>
<dbReference type="FunCoup" id="P20849">
    <property type="interactions" value="566"/>
</dbReference>
<dbReference type="IntAct" id="P20849">
    <property type="interactions" value="11"/>
</dbReference>
<dbReference type="MINT" id="P20849"/>
<dbReference type="STRING" id="9606.ENSP00000349790"/>
<dbReference type="GlyCosmos" id="P20849">
    <property type="glycosylation" value="1 site, No reported glycans"/>
</dbReference>
<dbReference type="GlyGen" id="P20849">
    <property type="glycosylation" value="2 sites, 1 O-linked glycan (1 site)"/>
</dbReference>
<dbReference type="iPTMnet" id="P20849"/>
<dbReference type="PhosphoSitePlus" id="P20849"/>
<dbReference type="BioMuta" id="COL9A1"/>
<dbReference type="DMDM" id="296439373"/>
<dbReference type="MassIVE" id="P20849"/>
<dbReference type="PaxDb" id="9606-ENSP00000349790"/>
<dbReference type="PeptideAtlas" id="P20849"/>
<dbReference type="ProteomicsDB" id="53816">
    <molecule id="P20849-1"/>
</dbReference>
<dbReference type="ProteomicsDB" id="53817">
    <molecule id="P20849-2"/>
</dbReference>
<dbReference type="ProteomicsDB" id="53818">
    <molecule id="P20849-3"/>
</dbReference>
<dbReference type="Antibodypedia" id="17698">
    <property type="antibodies" value="187 antibodies from 32 providers"/>
</dbReference>
<dbReference type="DNASU" id="1297"/>
<dbReference type="Ensembl" id="ENST00000320755.12">
    <molecule id="P20849-2"/>
    <property type="protein sequence ID" value="ENSP00000315252.7"/>
    <property type="gene ID" value="ENSG00000112280.18"/>
</dbReference>
<dbReference type="Ensembl" id="ENST00000357250.11">
    <molecule id="P20849-1"/>
    <property type="protein sequence ID" value="ENSP00000349790.6"/>
    <property type="gene ID" value="ENSG00000112280.18"/>
</dbReference>
<dbReference type="Ensembl" id="ENST00000370496.3">
    <molecule id="P20849-3"/>
    <property type="protein sequence ID" value="ENSP00000359527.3"/>
    <property type="gene ID" value="ENSG00000112280.18"/>
</dbReference>
<dbReference type="GeneID" id="1297"/>
<dbReference type="KEGG" id="hsa:1297"/>
<dbReference type="MANE-Select" id="ENST00000357250.11">
    <property type="protein sequence ID" value="ENSP00000349790.6"/>
    <property type="RefSeq nucleotide sequence ID" value="NM_001851.6"/>
    <property type="RefSeq protein sequence ID" value="NP_001842.3"/>
</dbReference>
<dbReference type="UCSC" id="uc003pff.5">
    <molecule id="P20849-1"/>
    <property type="organism name" value="human"/>
</dbReference>
<dbReference type="AGR" id="HGNC:2217"/>
<dbReference type="CTD" id="1297"/>
<dbReference type="DisGeNET" id="1297"/>
<dbReference type="GeneCards" id="COL9A1"/>
<dbReference type="GeneReviews" id="COL9A1"/>
<dbReference type="HGNC" id="HGNC:2217">
    <property type="gene designation" value="COL9A1"/>
</dbReference>
<dbReference type="HPA" id="ENSG00000112280">
    <property type="expression patterns" value="Tissue enhanced (brain, choroid plexus, prostate)"/>
</dbReference>
<dbReference type="MalaCards" id="COL9A1"/>
<dbReference type="MIM" id="120210">
    <property type="type" value="gene"/>
</dbReference>
<dbReference type="MIM" id="614134">
    <property type="type" value="phenotype"/>
</dbReference>
<dbReference type="MIM" id="614135">
    <property type="type" value="phenotype"/>
</dbReference>
<dbReference type="neXtProt" id="NX_P20849"/>
<dbReference type="OpenTargets" id="ENSG00000112280"/>
<dbReference type="Orphanet" id="250984">
    <property type="disease" value="Autosomal recessive Stickler syndrome"/>
</dbReference>
<dbReference type="Orphanet" id="166002">
    <property type="disease" value="Multiple epiphyseal dysplasia due to collagen 9 anomaly"/>
</dbReference>
<dbReference type="PharmGKB" id="PA26733"/>
<dbReference type="VEuPathDB" id="HostDB:ENSG00000112280"/>
<dbReference type="eggNOG" id="KOG3544">
    <property type="taxonomic scope" value="Eukaryota"/>
</dbReference>
<dbReference type="GeneTree" id="ENSGT00940000157935"/>
<dbReference type="HOGENOM" id="CLU_001074_18_1_1"/>
<dbReference type="InParanoid" id="P20849"/>
<dbReference type="OMA" id="KHWSIWQ"/>
<dbReference type="OrthoDB" id="6161718at2759"/>
<dbReference type="PAN-GO" id="P20849">
    <property type="GO annotations" value="5 GO annotations based on evolutionary models"/>
</dbReference>
<dbReference type="PhylomeDB" id="P20849"/>
<dbReference type="TreeFam" id="TF332900"/>
<dbReference type="PathwayCommons" id="P20849"/>
<dbReference type="Reactome" id="R-HSA-1442490">
    <property type="pathway name" value="Collagen degradation"/>
</dbReference>
<dbReference type="Reactome" id="R-HSA-1650814">
    <property type="pathway name" value="Collagen biosynthesis and modifying enzymes"/>
</dbReference>
<dbReference type="Reactome" id="R-HSA-186797">
    <property type="pathway name" value="Signaling by PDGF"/>
</dbReference>
<dbReference type="Reactome" id="R-HSA-2022090">
    <property type="pathway name" value="Assembly of collagen fibrils and other multimeric structures"/>
</dbReference>
<dbReference type="Reactome" id="R-HSA-216083">
    <property type="pathway name" value="Integrin cell surface interactions"/>
</dbReference>
<dbReference type="Reactome" id="R-HSA-3000178">
    <property type="pathway name" value="ECM proteoglycans"/>
</dbReference>
<dbReference type="Reactome" id="R-HSA-419037">
    <property type="pathway name" value="NCAM1 interactions"/>
</dbReference>
<dbReference type="Reactome" id="R-HSA-8948216">
    <property type="pathway name" value="Collagen chain trimerization"/>
</dbReference>
<dbReference type="SignaLink" id="P20849"/>
<dbReference type="BioGRID-ORCS" id="1297">
    <property type="hits" value="7 hits in 1139 CRISPR screens"/>
</dbReference>
<dbReference type="ChiTaRS" id="COL9A1">
    <property type="organism name" value="human"/>
</dbReference>
<dbReference type="EvolutionaryTrace" id="P20849"/>
<dbReference type="GeneWiki" id="Collagen,_type_IX,_alpha_1"/>
<dbReference type="GenomeRNAi" id="1297"/>
<dbReference type="Pharos" id="P20849">
    <property type="development level" value="Tbio"/>
</dbReference>
<dbReference type="PRO" id="PR:P20849"/>
<dbReference type="Proteomes" id="UP000005640">
    <property type="component" value="Chromosome 6"/>
</dbReference>
<dbReference type="RNAct" id="P20849">
    <property type="molecule type" value="protein"/>
</dbReference>
<dbReference type="Bgee" id="ENSG00000112280">
    <property type="expression patterns" value="Expressed in tibia and 114 other cell types or tissues"/>
</dbReference>
<dbReference type="ExpressionAtlas" id="P20849">
    <property type="expression patterns" value="baseline and differential"/>
</dbReference>
<dbReference type="GO" id="GO:0005594">
    <property type="term" value="C:collagen type IX trimer"/>
    <property type="evidence" value="ECO:0000314"/>
    <property type="project" value="BHF-UCL"/>
</dbReference>
<dbReference type="GO" id="GO:0062023">
    <property type="term" value="C:collagen-containing extracellular matrix"/>
    <property type="evidence" value="ECO:0007005"/>
    <property type="project" value="BHF-UCL"/>
</dbReference>
<dbReference type="GO" id="GO:0005788">
    <property type="term" value="C:endoplasmic reticulum lumen"/>
    <property type="evidence" value="ECO:0000304"/>
    <property type="project" value="Reactome"/>
</dbReference>
<dbReference type="GO" id="GO:0005576">
    <property type="term" value="C:extracellular region"/>
    <property type="evidence" value="ECO:0000304"/>
    <property type="project" value="Reactome"/>
</dbReference>
<dbReference type="GO" id="GO:0005615">
    <property type="term" value="C:extracellular space"/>
    <property type="evidence" value="ECO:0000318"/>
    <property type="project" value="GO_Central"/>
</dbReference>
<dbReference type="GO" id="GO:0030246">
    <property type="term" value="F:carbohydrate binding"/>
    <property type="evidence" value="ECO:0000315"/>
    <property type="project" value="DisProt"/>
</dbReference>
<dbReference type="GO" id="GO:0030020">
    <property type="term" value="F:extracellular matrix structural constituent conferring tensile strength"/>
    <property type="evidence" value="ECO:0000318"/>
    <property type="project" value="GO_Central"/>
</dbReference>
<dbReference type="GO" id="GO:0046872">
    <property type="term" value="F:metal ion binding"/>
    <property type="evidence" value="ECO:0007669"/>
    <property type="project" value="UniProtKB-KW"/>
</dbReference>
<dbReference type="GO" id="GO:0042803">
    <property type="term" value="F:protein homodimerization activity"/>
    <property type="evidence" value="ECO:0000353"/>
    <property type="project" value="BHF-UCL"/>
</dbReference>
<dbReference type="GO" id="GO:0009887">
    <property type="term" value="P:animal organ morphogenesis"/>
    <property type="evidence" value="ECO:0000304"/>
    <property type="project" value="ProtInc"/>
</dbReference>
<dbReference type="FunFam" id="2.60.120.200:FF:000105">
    <property type="entry name" value="Collagen type IX alpha 1 chain"/>
    <property type="match status" value="1"/>
</dbReference>
<dbReference type="Gene3D" id="2.60.120.200">
    <property type="match status" value="1"/>
</dbReference>
<dbReference type="InterPro" id="IPR008160">
    <property type="entry name" value="Collagen"/>
</dbReference>
<dbReference type="InterPro" id="IPR050149">
    <property type="entry name" value="Collagen_superfamily"/>
</dbReference>
<dbReference type="InterPro" id="IPR013320">
    <property type="entry name" value="ConA-like_dom_sf"/>
</dbReference>
<dbReference type="InterPro" id="IPR048287">
    <property type="entry name" value="TSPN-like_N"/>
</dbReference>
<dbReference type="PANTHER" id="PTHR24023">
    <property type="entry name" value="COLLAGEN ALPHA"/>
    <property type="match status" value="1"/>
</dbReference>
<dbReference type="PANTHER" id="PTHR24023:SF1113">
    <property type="entry name" value="COLLAGEN ALPHA-2(IX) CHAIN-LIKE ISOFORM X1"/>
    <property type="match status" value="1"/>
</dbReference>
<dbReference type="Pfam" id="PF01391">
    <property type="entry name" value="Collagen"/>
    <property type="match status" value="8"/>
</dbReference>
<dbReference type="SMART" id="SM00210">
    <property type="entry name" value="TSPN"/>
    <property type="match status" value="1"/>
</dbReference>
<dbReference type="SUPFAM" id="SSF49899">
    <property type="entry name" value="Concanavalin A-like lectins/glucanases"/>
    <property type="match status" value="1"/>
</dbReference>
<comment type="function">
    <text>Structural component of hyaline cartilage and vitreous of the eye.</text>
</comment>
<comment type="subunit">
    <text>Heterotrimer of an alpha 1(IX), an alpha 2(IX) and an alpha 3(IX) chain.</text>
</comment>
<comment type="interaction">
    <interactant intactId="EBI-2528238">
        <id>P20849</id>
    </interactant>
    <interactant intactId="EBI-2465913">
        <id>P12109</id>
        <label>COL6A1</label>
    </interactant>
    <organismsDiffer>false</organismsDiffer>
    <experiments>2</experiments>
</comment>
<comment type="interaction">
    <interactant intactId="EBI-2528238">
        <id>P20849</id>
    </interactant>
    <interactant intactId="EBI-6875961">
        <id>P02489</id>
        <label>CRYAA</label>
    </interactant>
    <organismsDiffer>false</organismsDiffer>
    <experiments>3</experiments>
</comment>
<comment type="interaction">
    <interactant intactId="EBI-2528238">
        <id>P20849</id>
    </interactant>
    <interactant intactId="EBI-25913156">
        <id>O14908-2</id>
        <label>GIPC1</label>
    </interactant>
    <organismsDiffer>false</organismsDiffer>
    <experiments>3</experiments>
</comment>
<comment type="interaction">
    <interactant intactId="EBI-2528238">
        <id>P20849</id>
    </interactant>
    <interactant intactId="EBI-2432309">
        <id>Q92876</id>
        <label>KLK6</label>
    </interactant>
    <organismsDiffer>false</organismsDiffer>
    <experiments>3</experiments>
</comment>
<comment type="subcellular location">
    <subcellularLocation>
        <location evidence="1">Secreted</location>
        <location evidence="1">Extracellular space</location>
        <location evidence="1">Extracellular matrix</location>
    </subcellularLocation>
</comment>
<comment type="alternative products">
    <event type="alternative splicing"/>
    <isoform>
        <id>P20849-1</id>
        <name>1</name>
        <name>Long</name>
        <sequence type="displayed"/>
    </isoform>
    <isoform>
        <id>P20849-2</id>
        <name>2</name>
        <name>Short</name>
        <sequence type="described" ref="VSP_001141 VSP_001142"/>
    </isoform>
    <isoform>
        <id>P20849-3</id>
        <name>3</name>
        <sequence type="described" ref="VSP_015250 VSP_015251"/>
    </isoform>
    <text>Additional isoforms seem to exist.</text>
</comment>
<comment type="domain">
    <text>Each subunit is composed of three triple-helical domains interspersed with non-collagenous domains. The globular domain at the N-terminus of type IX collagen molecules represents the NC4 domain which may participate in electrostatic interactions with polyanionic glycosaminoglycans in cartilage.</text>
</comment>
<comment type="PTM">
    <text>Covalently linked to the telopeptides of type II collagen by lysine-derived cross-links.</text>
</comment>
<comment type="PTM">
    <text>Prolines at the third position of the tripeptide repeating unit (G-X-Y) are hydroxylated in some or all of the chains.</text>
</comment>
<comment type="disease" evidence="4">
    <disease id="DI-01355">
        <name>Multiple epiphyseal dysplasia 6</name>
        <acronym>EDM6</acronym>
        <description>A generalized skeletal dysplasia associated with significant morbidity. Joint pain, joint deformity, waddling gait, and short stature are the main clinical signs and symptoms. Radiological examination of the skeleton shows delayed, irregular mineralization of the epiphyseal ossification centers and of the centers of the carpal and tarsal bones. Multiple epiphyseal dysplasia is broadly categorized into the more severe Fairbank and the milder Ribbing types. The Fairbank type is characterized by shortness of stature, short and stubby fingers, small epiphyses in several joints, including the knee, ankle, hand, and hip. The Ribbing type is confined predominantly to the hip joints and is characterized by hands that are normal and stature that is normal or near-normal.</description>
        <dbReference type="MIM" id="614135"/>
    </disease>
    <text>The disease is caused by variants affecting the gene represented in this entry.</text>
</comment>
<comment type="disease" evidence="5 7 10">
    <disease id="DI-01089">
        <name>Stickler syndrome 4</name>
        <acronym>STL4</acronym>
        <description>An autosomal recessive form of Stickler syndrome, an inherited disorder that associates ocular signs with more or less complete forms of Pierre Robin sequence, bone disorders and sensorineural deafness. Ocular disorders may include juvenile cataract, myopia, strabismus, vitreoretinal or chorioretinal degeneration, retinal detachment, and chronic uveitis. Pierre Robin sequence includes an opening in the roof of the mouth (a cleft palate), a large tongue (macroglossia), and a small lower jaw (micrognathia). Bones are affected by slight platyspondylisis and large, often defective epiphyses. Juvenile joint laxity is followed by early signs of arthrosis. The degree of hearing loss varies among affected individuals and may become more severe over time. Syndrome expressivity is variable.</description>
        <dbReference type="MIM" id="614134"/>
    </disease>
    <text>The disease is caused by variants affecting the gene represented in this entry.</text>
</comment>
<comment type="similarity">
    <text evidence="14">Belongs to the fibril-associated collagens with interrupted helices (FACIT) family.</text>
</comment>